<proteinExistence type="inferred from homology"/>
<comment type="function">
    <text evidence="1">Produces ATP from ADP in the presence of a proton gradient across the membrane. The gamma chain is believed to be important in regulating ATPase activity and the flow of protons through the CF(0) complex.</text>
</comment>
<comment type="subunit">
    <text evidence="1">F-type ATPases have 2 components, CF(1) - the catalytic core - and CF(0) - the membrane proton channel. CF(1) has five subunits: alpha(3), beta(3), gamma(1), delta(1), epsilon(1). CF(0) has three main subunits: a, b and c.</text>
</comment>
<comment type="subcellular location">
    <subcellularLocation>
        <location evidence="1">Cell inner membrane</location>
        <topology evidence="1">Peripheral membrane protein</topology>
    </subcellularLocation>
</comment>
<comment type="similarity">
    <text evidence="1">Belongs to the ATPase gamma chain family.</text>
</comment>
<name>ATPG_FLAPJ</name>
<evidence type="ECO:0000255" key="1">
    <source>
        <dbReference type="HAMAP-Rule" id="MF_00815"/>
    </source>
</evidence>
<gene>
    <name evidence="1" type="primary">atpG</name>
    <name type="ordered locus">FP2457</name>
</gene>
<protein>
    <recommendedName>
        <fullName evidence="1">ATP synthase gamma chain</fullName>
    </recommendedName>
    <alternativeName>
        <fullName evidence="1">ATP synthase F1 sector gamma subunit</fullName>
    </alternativeName>
    <alternativeName>
        <fullName evidence="1">F-ATPase gamma subunit</fullName>
    </alternativeName>
</protein>
<organism>
    <name type="scientific">Flavobacterium psychrophilum (strain ATCC 49511 / DSM 21280 / CIP 103535 / JIP02/86)</name>
    <dbReference type="NCBI Taxonomy" id="402612"/>
    <lineage>
        <taxon>Bacteria</taxon>
        <taxon>Pseudomonadati</taxon>
        <taxon>Bacteroidota</taxon>
        <taxon>Flavobacteriia</taxon>
        <taxon>Flavobacteriales</taxon>
        <taxon>Flavobacteriaceae</taxon>
        <taxon>Flavobacterium</taxon>
    </lineage>
</organism>
<feature type="chain" id="PRO_1000053211" description="ATP synthase gamma chain">
    <location>
        <begin position="1"/>
        <end position="286"/>
    </location>
</feature>
<reference key="1">
    <citation type="journal article" date="2007" name="Nat. Biotechnol.">
        <title>Complete genome sequence of the fish pathogen Flavobacterium psychrophilum.</title>
        <authorList>
            <person name="Duchaud E."/>
            <person name="Boussaha M."/>
            <person name="Loux V."/>
            <person name="Bernardet J.-F."/>
            <person name="Michel C."/>
            <person name="Kerouault B."/>
            <person name="Mondot S."/>
            <person name="Nicolas P."/>
            <person name="Bossy R."/>
            <person name="Caron C."/>
            <person name="Bessieres P."/>
            <person name="Gibrat J.-F."/>
            <person name="Claverol S."/>
            <person name="Dumetz F."/>
            <person name="Le Henaff M."/>
            <person name="Benmansour A."/>
        </authorList>
    </citation>
    <scope>NUCLEOTIDE SEQUENCE [LARGE SCALE GENOMIC DNA]</scope>
    <source>
        <strain>ATCC 49511 / DSM 21280 / CIP 103535 / JIP02/86</strain>
    </source>
</reference>
<sequence>MANLKEIRNRITSVSSTMQITSAMKMVSAAKLKKAQDAITAMRPYAEKLTELLQNLSATLDGDAGGEFTKQREIKKVLVVAITSNRGLCGAFNTNVIKEVKNRADFYAGKQVDVFAIGKKGNDVLSKTLSVIDNQSSVFDALTFDNVAKIAQMLTDKFVAGEYDRIEVIYNQFKNAATQIVQTEQFLPLAPIKSDLPVSTGDYIFEPSKEEIVLTLIPKSLKTQLYKGIRDSFASEHGARMTAMHKATDNATELRDQLKLTYNKARQAAITNEILEIVGGAEALKG</sequence>
<dbReference type="EMBL" id="AM398681">
    <property type="protein sequence ID" value="CAL44510.1"/>
    <property type="molecule type" value="Genomic_DNA"/>
</dbReference>
<dbReference type="RefSeq" id="WP_011964544.1">
    <property type="nucleotide sequence ID" value="NC_009613.3"/>
</dbReference>
<dbReference type="RefSeq" id="YP_001297311.1">
    <property type="nucleotide sequence ID" value="NC_009613.3"/>
</dbReference>
<dbReference type="SMR" id="A6H2D6"/>
<dbReference type="STRING" id="402612.FP2457"/>
<dbReference type="EnsemblBacteria" id="CAL44510">
    <property type="protein sequence ID" value="CAL44510"/>
    <property type="gene ID" value="FP2457"/>
</dbReference>
<dbReference type="GeneID" id="66553567"/>
<dbReference type="KEGG" id="fps:FP2457"/>
<dbReference type="PATRIC" id="fig|402612.5.peg.2515"/>
<dbReference type="eggNOG" id="COG0224">
    <property type="taxonomic scope" value="Bacteria"/>
</dbReference>
<dbReference type="HOGENOM" id="CLU_050669_0_1_10"/>
<dbReference type="OrthoDB" id="9812769at2"/>
<dbReference type="Proteomes" id="UP000006394">
    <property type="component" value="Chromosome"/>
</dbReference>
<dbReference type="GO" id="GO:0005886">
    <property type="term" value="C:plasma membrane"/>
    <property type="evidence" value="ECO:0007669"/>
    <property type="project" value="UniProtKB-SubCell"/>
</dbReference>
<dbReference type="GO" id="GO:0045259">
    <property type="term" value="C:proton-transporting ATP synthase complex"/>
    <property type="evidence" value="ECO:0007669"/>
    <property type="project" value="UniProtKB-KW"/>
</dbReference>
<dbReference type="GO" id="GO:0005524">
    <property type="term" value="F:ATP binding"/>
    <property type="evidence" value="ECO:0007669"/>
    <property type="project" value="UniProtKB-UniRule"/>
</dbReference>
<dbReference type="GO" id="GO:0046933">
    <property type="term" value="F:proton-transporting ATP synthase activity, rotational mechanism"/>
    <property type="evidence" value="ECO:0007669"/>
    <property type="project" value="UniProtKB-UniRule"/>
</dbReference>
<dbReference type="GO" id="GO:0042777">
    <property type="term" value="P:proton motive force-driven plasma membrane ATP synthesis"/>
    <property type="evidence" value="ECO:0007669"/>
    <property type="project" value="UniProtKB-UniRule"/>
</dbReference>
<dbReference type="CDD" id="cd12151">
    <property type="entry name" value="F1-ATPase_gamma"/>
    <property type="match status" value="1"/>
</dbReference>
<dbReference type="FunFam" id="1.10.287.80:FF:000019">
    <property type="entry name" value="ATP synthase gamma chain"/>
    <property type="match status" value="1"/>
</dbReference>
<dbReference type="Gene3D" id="3.40.1380.10">
    <property type="match status" value="1"/>
</dbReference>
<dbReference type="Gene3D" id="1.10.287.80">
    <property type="entry name" value="ATP synthase, gamma subunit, helix hairpin domain"/>
    <property type="match status" value="1"/>
</dbReference>
<dbReference type="HAMAP" id="MF_00815">
    <property type="entry name" value="ATP_synth_gamma_bact"/>
    <property type="match status" value="1"/>
</dbReference>
<dbReference type="InterPro" id="IPR035968">
    <property type="entry name" value="ATP_synth_F1_ATPase_gsu"/>
</dbReference>
<dbReference type="InterPro" id="IPR000131">
    <property type="entry name" value="ATP_synth_F1_gsu"/>
</dbReference>
<dbReference type="InterPro" id="IPR023632">
    <property type="entry name" value="ATP_synth_F1_gsu_CS"/>
</dbReference>
<dbReference type="NCBIfam" id="TIGR01146">
    <property type="entry name" value="ATPsyn_F1gamma"/>
    <property type="match status" value="1"/>
</dbReference>
<dbReference type="PANTHER" id="PTHR11693">
    <property type="entry name" value="ATP SYNTHASE GAMMA CHAIN"/>
    <property type="match status" value="1"/>
</dbReference>
<dbReference type="PANTHER" id="PTHR11693:SF22">
    <property type="entry name" value="ATP SYNTHASE SUBUNIT GAMMA, MITOCHONDRIAL"/>
    <property type="match status" value="1"/>
</dbReference>
<dbReference type="Pfam" id="PF00231">
    <property type="entry name" value="ATP-synt"/>
    <property type="match status" value="1"/>
</dbReference>
<dbReference type="PRINTS" id="PR00126">
    <property type="entry name" value="ATPASEGAMMA"/>
</dbReference>
<dbReference type="SUPFAM" id="SSF52943">
    <property type="entry name" value="ATP synthase (F1-ATPase), gamma subunit"/>
    <property type="match status" value="1"/>
</dbReference>
<dbReference type="PROSITE" id="PS00153">
    <property type="entry name" value="ATPASE_GAMMA"/>
    <property type="match status" value="1"/>
</dbReference>
<keyword id="KW-0066">ATP synthesis</keyword>
<keyword id="KW-0997">Cell inner membrane</keyword>
<keyword id="KW-1003">Cell membrane</keyword>
<keyword id="KW-0139">CF(1)</keyword>
<keyword id="KW-0375">Hydrogen ion transport</keyword>
<keyword id="KW-0406">Ion transport</keyword>
<keyword id="KW-0472">Membrane</keyword>
<keyword id="KW-1185">Reference proteome</keyword>
<keyword id="KW-0813">Transport</keyword>
<accession>A6H2D6</accession>